<name>PRMA_LACLS</name>
<comment type="function">
    <text evidence="1">Methylates ribosomal protein L11.</text>
</comment>
<comment type="catalytic activity">
    <reaction evidence="1">
        <text>L-lysyl-[protein] + 3 S-adenosyl-L-methionine = N(6),N(6),N(6)-trimethyl-L-lysyl-[protein] + 3 S-adenosyl-L-homocysteine + 3 H(+)</text>
        <dbReference type="Rhea" id="RHEA:54192"/>
        <dbReference type="Rhea" id="RHEA-COMP:9752"/>
        <dbReference type="Rhea" id="RHEA-COMP:13826"/>
        <dbReference type="ChEBI" id="CHEBI:15378"/>
        <dbReference type="ChEBI" id="CHEBI:29969"/>
        <dbReference type="ChEBI" id="CHEBI:57856"/>
        <dbReference type="ChEBI" id="CHEBI:59789"/>
        <dbReference type="ChEBI" id="CHEBI:61961"/>
    </reaction>
</comment>
<comment type="subcellular location">
    <subcellularLocation>
        <location evidence="1">Cytoplasm</location>
    </subcellularLocation>
</comment>
<comment type="similarity">
    <text evidence="1">Belongs to the methyltransferase superfamily. PrmA family.</text>
</comment>
<gene>
    <name evidence="1" type="primary">prmA</name>
    <name type="ordered locus">LACR_0089</name>
</gene>
<sequence>MNNWNSITIKISREAEEAISALLIEAGSAGVEINDSADYLNHEDQFGEVLPEIEQSELVDITAYYPENMPIVELKAEIEHKIANLADYFSLTGLSVTTNNLSETNWAEAWKKYFEPARITHDLTIVPSWTKDYLATGSEKLIRLDPGMAFGTGTHPTTKMSLYALEQVLRGGETLLDVGTGSGVLSVAATYLGAAEIFAYDIDEVAVRVALENIELNPGHEKIHVSANNLLEGIDKKADVIVANILADILVLMTDDAFRLVKEEGYLIMSGIIADKADMVIASAENAGFFLETRLIQGEWNCLIFKKTENREGVIGG</sequence>
<dbReference type="EC" id="2.1.1.-" evidence="1"/>
<dbReference type="EMBL" id="CP000425">
    <property type="protein sequence ID" value="ABJ71716.1"/>
    <property type="molecule type" value="Genomic_DNA"/>
</dbReference>
<dbReference type="RefSeq" id="WP_011675153.1">
    <property type="nucleotide sequence ID" value="NC_008527.1"/>
</dbReference>
<dbReference type="SMR" id="Q033A6"/>
<dbReference type="KEGG" id="llc:LACR_0089"/>
<dbReference type="HOGENOM" id="CLU_049382_0_1_9"/>
<dbReference type="Proteomes" id="UP000000240">
    <property type="component" value="Chromosome"/>
</dbReference>
<dbReference type="GO" id="GO:0005737">
    <property type="term" value="C:cytoplasm"/>
    <property type="evidence" value="ECO:0007669"/>
    <property type="project" value="UniProtKB-SubCell"/>
</dbReference>
<dbReference type="GO" id="GO:0016279">
    <property type="term" value="F:protein-lysine N-methyltransferase activity"/>
    <property type="evidence" value="ECO:0007669"/>
    <property type="project" value="RHEA"/>
</dbReference>
<dbReference type="GO" id="GO:0032259">
    <property type="term" value="P:methylation"/>
    <property type="evidence" value="ECO:0007669"/>
    <property type="project" value="UniProtKB-KW"/>
</dbReference>
<dbReference type="CDD" id="cd02440">
    <property type="entry name" value="AdoMet_MTases"/>
    <property type="match status" value="1"/>
</dbReference>
<dbReference type="Gene3D" id="3.40.50.150">
    <property type="entry name" value="Vaccinia Virus protein VP39"/>
    <property type="match status" value="1"/>
</dbReference>
<dbReference type="HAMAP" id="MF_00735">
    <property type="entry name" value="Methyltr_PrmA"/>
    <property type="match status" value="1"/>
</dbReference>
<dbReference type="InterPro" id="IPR050078">
    <property type="entry name" value="Ribosomal_L11_MeTrfase_PrmA"/>
</dbReference>
<dbReference type="InterPro" id="IPR004498">
    <property type="entry name" value="Ribosomal_PrmA_MeTrfase"/>
</dbReference>
<dbReference type="InterPro" id="IPR029063">
    <property type="entry name" value="SAM-dependent_MTases_sf"/>
</dbReference>
<dbReference type="NCBIfam" id="TIGR00406">
    <property type="entry name" value="prmA"/>
    <property type="match status" value="1"/>
</dbReference>
<dbReference type="PANTHER" id="PTHR43648">
    <property type="entry name" value="ELECTRON TRANSFER FLAVOPROTEIN BETA SUBUNIT LYSINE METHYLTRANSFERASE"/>
    <property type="match status" value="1"/>
</dbReference>
<dbReference type="PANTHER" id="PTHR43648:SF1">
    <property type="entry name" value="ELECTRON TRANSFER FLAVOPROTEIN BETA SUBUNIT LYSINE METHYLTRANSFERASE"/>
    <property type="match status" value="1"/>
</dbReference>
<dbReference type="Pfam" id="PF06325">
    <property type="entry name" value="PrmA"/>
    <property type="match status" value="1"/>
</dbReference>
<dbReference type="PIRSF" id="PIRSF000401">
    <property type="entry name" value="RPL11_MTase"/>
    <property type="match status" value="1"/>
</dbReference>
<dbReference type="SUPFAM" id="SSF53335">
    <property type="entry name" value="S-adenosyl-L-methionine-dependent methyltransferases"/>
    <property type="match status" value="1"/>
</dbReference>
<feature type="chain" id="PRO_1000046039" description="Ribosomal protein L11 methyltransferase">
    <location>
        <begin position="1"/>
        <end position="317"/>
    </location>
</feature>
<feature type="binding site" evidence="1">
    <location>
        <position position="158"/>
    </location>
    <ligand>
        <name>S-adenosyl-L-methionine</name>
        <dbReference type="ChEBI" id="CHEBI:59789"/>
    </ligand>
</feature>
<feature type="binding site" evidence="1">
    <location>
        <position position="179"/>
    </location>
    <ligand>
        <name>S-adenosyl-L-methionine</name>
        <dbReference type="ChEBI" id="CHEBI:59789"/>
    </ligand>
</feature>
<feature type="binding site" evidence="1">
    <location>
        <position position="201"/>
    </location>
    <ligand>
        <name>S-adenosyl-L-methionine</name>
        <dbReference type="ChEBI" id="CHEBI:59789"/>
    </ligand>
</feature>
<feature type="binding site" evidence="1">
    <location>
        <position position="244"/>
    </location>
    <ligand>
        <name>S-adenosyl-L-methionine</name>
        <dbReference type="ChEBI" id="CHEBI:59789"/>
    </ligand>
</feature>
<keyword id="KW-0963">Cytoplasm</keyword>
<keyword id="KW-0489">Methyltransferase</keyword>
<keyword id="KW-0949">S-adenosyl-L-methionine</keyword>
<keyword id="KW-0808">Transferase</keyword>
<evidence type="ECO:0000255" key="1">
    <source>
        <dbReference type="HAMAP-Rule" id="MF_00735"/>
    </source>
</evidence>
<proteinExistence type="inferred from homology"/>
<reference key="1">
    <citation type="journal article" date="2006" name="Proc. Natl. Acad. Sci. U.S.A.">
        <title>Comparative genomics of the lactic acid bacteria.</title>
        <authorList>
            <person name="Makarova K.S."/>
            <person name="Slesarev A."/>
            <person name="Wolf Y.I."/>
            <person name="Sorokin A."/>
            <person name="Mirkin B."/>
            <person name="Koonin E.V."/>
            <person name="Pavlov A."/>
            <person name="Pavlova N."/>
            <person name="Karamychev V."/>
            <person name="Polouchine N."/>
            <person name="Shakhova V."/>
            <person name="Grigoriev I."/>
            <person name="Lou Y."/>
            <person name="Rohksar D."/>
            <person name="Lucas S."/>
            <person name="Huang K."/>
            <person name="Goodstein D.M."/>
            <person name="Hawkins T."/>
            <person name="Plengvidhya V."/>
            <person name="Welker D."/>
            <person name="Hughes J."/>
            <person name="Goh Y."/>
            <person name="Benson A."/>
            <person name="Baldwin K."/>
            <person name="Lee J.-H."/>
            <person name="Diaz-Muniz I."/>
            <person name="Dosti B."/>
            <person name="Smeianov V."/>
            <person name="Wechter W."/>
            <person name="Barabote R."/>
            <person name="Lorca G."/>
            <person name="Altermann E."/>
            <person name="Barrangou R."/>
            <person name="Ganesan B."/>
            <person name="Xie Y."/>
            <person name="Rawsthorne H."/>
            <person name="Tamir D."/>
            <person name="Parker C."/>
            <person name="Breidt F."/>
            <person name="Broadbent J.R."/>
            <person name="Hutkins R."/>
            <person name="O'Sullivan D."/>
            <person name="Steele J."/>
            <person name="Unlu G."/>
            <person name="Saier M.H. Jr."/>
            <person name="Klaenhammer T."/>
            <person name="Richardson P."/>
            <person name="Kozyavkin S."/>
            <person name="Weimer B.C."/>
            <person name="Mills D.A."/>
        </authorList>
    </citation>
    <scope>NUCLEOTIDE SEQUENCE [LARGE SCALE GENOMIC DNA]</scope>
    <source>
        <strain>SK11</strain>
    </source>
</reference>
<organism>
    <name type="scientific">Lactococcus lactis subsp. cremoris (strain SK11)</name>
    <dbReference type="NCBI Taxonomy" id="272622"/>
    <lineage>
        <taxon>Bacteria</taxon>
        <taxon>Bacillati</taxon>
        <taxon>Bacillota</taxon>
        <taxon>Bacilli</taxon>
        <taxon>Lactobacillales</taxon>
        <taxon>Streptococcaceae</taxon>
        <taxon>Lactococcus</taxon>
        <taxon>Lactococcus cremoris subsp. cremoris</taxon>
    </lineage>
</organism>
<protein>
    <recommendedName>
        <fullName evidence="1">Ribosomal protein L11 methyltransferase</fullName>
        <shortName evidence="1">L11 Mtase</shortName>
        <ecNumber evidence="1">2.1.1.-</ecNumber>
    </recommendedName>
</protein>
<accession>Q033A6</accession>